<reference key="1">
    <citation type="journal article" date="2004" name="Nat. Genet.">
        <title>Comparison of genome degradation in Paratyphi A and Typhi, human-restricted serovars of Salmonella enterica that cause typhoid.</title>
        <authorList>
            <person name="McClelland M."/>
            <person name="Sanderson K.E."/>
            <person name="Clifton S.W."/>
            <person name="Latreille P."/>
            <person name="Porwollik S."/>
            <person name="Sabo A."/>
            <person name="Meyer R."/>
            <person name="Bieri T."/>
            <person name="Ozersky P."/>
            <person name="McLellan M."/>
            <person name="Harkins C.R."/>
            <person name="Wang C."/>
            <person name="Nguyen C."/>
            <person name="Berghoff A."/>
            <person name="Elliott G."/>
            <person name="Kohlberg S."/>
            <person name="Strong C."/>
            <person name="Du F."/>
            <person name="Carter J."/>
            <person name="Kremizki C."/>
            <person name="Layman D."/>
            <person name="Leonard S."/>
            <person name="Sun H."/>
            <person name="Fulton L."/>
            <person name="Nash W."/>
            <person name="Miner T."/>
            <person name="Minx P."/>
            <person name="Delehaunty K."/>
            <person name="Fronick C."/>
            <person name="Magrini V."/>
            <person name="Nhan M."/>
            <person name="Warren W."/>
            <person name="Florea L."/>
            <person name="Spieth J."/>
            <person name="Wilson R.K."/>
        </authorList>
    </citation>
    <scope>NUCLEOTIDE SEQUENCE [LARGE SCALE GENOMIC DNA]</scope>
    <source>
        <strain>ATCC 9150 / SARB42</strain>
    </source>
</reference>
<name>KDUI_SALPA</name>
<evidence type="ECO:0000255" key="1">
    <source>
        <dbReference type="HAMAP-Rule" id="MF_00687"/>
    </source>
</evidence>
<gene>
    <name evidence="1" type="primary">kduI</name>
    <name type="ordered locus">SPA2885</name>
</gene>
<accession>Q5PEP3</accession>
<feature type="chain" id="PRO_1000045089" description="4-deoxy-L-threo-5-hexosulose-uronate ketol-isomerase">
    <location>
        <begin position="1"/>
        <end position="278"/>
    </location>
</feature>
<feature type="binding site" evidence="1">
    <location>
        <position position="196"/>
    </location>
    <ligand>
        <name>Zn(2+)</name>
        <dbReference type="ChEBI" id="CHEBI:29105"/>
    </ligand>
</feature>
<feature type="binding site" evidence="1">
    <location>
        <position position="198"/>
    </location>
    <ligand>
        <name>Zn(2+)</name>
        <dbReference type="ChEBI" id="CHEBI:29105"/>
    </ligand>
</feature>
<feature type="binding site" evidence="1">
    <location>
        <position position="203"/>
    </location>
    <ligand>
        <name>Zn(2+)</name>
        <dbReference type="ChEBI" id="CHEBI:29105"/>
    </ligand>
</feature>
<feature type="binding site" evidence="1">
    <location>
        <position position="245"/>
    </location>
    <ligand>
        <name>Zn(2+)</name>
        <dbReference type="ChEBI" id="CHEBI:29105"/>
    </ligand>
</feature>
<protein>
    <recommendedName>
        <fullName evidence="1">4-deoxy-L-threo-5-hexosulose-uronate ketol-isomerase</fullName>
        <ecNumber evidence="1">5.3.1.17</ecNumber>
    </recommendedName>
    <alternativeName>
        <fullName evidence="1">5-keto-4-deoxyuronate isomerase</fullName>
    </alternativeName>
    <alternativeName>
        <fullName evidence="1">DKI isomerase</fullName>
    </alternativeName>
</protein>
<keyword id="KW-0413">Isomerase</keyword>
<keyword id="KW-0479">Metal-binding</keyword>
<keyword id="KW-0862">Zinc</keyword>
<organism>
    <name type="scientific">Salmonella paratyphi A (strain ATCC 9150 / SARB42)</name>
    <dbReference type="NCBI Taxonomy" id="295319"/>
    <lineage>
        <taxon>Bacteria</taxon>
        <taxon>Pseudomonadati</taxon>
        <taxon>Pseudomonadota</taxon>
        <taxon>Gammaproteobacteria</taxon>
        <taxon>Enterobacterales</taxon>
        <taxon>Enterobacteriaceae</taxon>
        <taxon>Salmonella</taxon>
    </lineage>
</organism>
<comment type="function">
    <text evidence="1">Catalyzes the isomerization of 5-dehydro-4-deoxy-D-glucuronate to 3-deoxy-D-glycero-2,5-hexodiulosonate.</text>
</comment>
<comment type="catalytic activity">
    <reaction evidence="1">
        <text>5-dehydro-4-deoxy-D-glucuronate = 3-deoxy-D-glycero-2,5-hexodiulosonate</text>
        <dbReference type="Rhea" id="RHEA:23896"/>
        <dbReference type="ChEBI" id="CHEBI:17117"/>
        <dbReference type="ChEBI" id="CHEBI:29071"/>
        <dbReference type="EC" id="5.3.1.17"/>
    </reaction>
</comment>
<comment type="cofactor">
    <cofactor evidence="1">
        <name>Zn(2+)</name>
        <dbReference type="ChEBI" id="CHEBI:29105"/>
    </cofactor>
    <text evidence="1">Binds 1 zinc ion per subunit.</text>
</comment>
<comment type="pathway">
    <text evidence="1">Glycan metabolism; pectin degradation; 2-dehydro-3-deoxy-D-gluconate from pectin: step 4/5.</text>
</comment>
<comment type="similarity">
    <text evidence="1">Belongs to the KduI family.</text>
</comment>
<proteinExistence type="inferred from homology"/>
<sequence>MDVRQSIHSEHAKTLDTQALRREFLIENIFVADEYTMVYSHIDRIIVGGIMPVSHPVEIGGEVGKQLGVSRLLDRRELGVINIGGAGAIIVDGQRHDIGHRDALYISKGAKELVFVSNEASRPAKFYYNCAPAHTAYPTKKVSPADVAPVTLGDNLTSNRRTINKYFVPDVLETCQLSMGLTELAPGNLWNTMPCHTHERRMEVYLYFNMEEDSCVFHMMGQPQETRHIVMRNEQAVISPSWSIHSGVGTKAYTFIWGMVGENQVFDDMDHVAVQDLR</sequence>
<dbReference type="EC" id="5.3.1.17" evidence="1"/>
<dbReference type="EMBL" id="CP000026">
    <property type="protein sequence ID" value="AAV78728.1"/>
    <property type="molecule type" value="Genomic_DNA"/>
</dbReference>
<dbReference type="RefSeq" id="WP_000383272.1">
    <property type="nucleotide sequence ID" value="NC_006511.1"/>
</dbReference>
<dbReference type="SMR" id="Q5PEP3"/>
<dbReference type="KEGG" id="spt:SPA2885"/>
<dbReference type="HOGENOM" id="CLU_062609_0_0_6"/>
<dbReference type="UniPathway" id="UPA00545">
    <property type="reaction ID" value="UER00826"/>
</dbReference>
<dbReference type="Proteomes" id="UP000008185">
    <property type="component" value="Chromosome"/>
</dbReference>
<dbReference type="GO" id="GO:0008697">
    <property type="term" value="F:4-deoxy-L-threo-5-hexosulose-uronate ketol-isomerase activity"/>
    <property type="evidence" value="ECO:0007669"/>
    <property type="project" value="UniProtKB-UniRule"/>
</dbReference>
<dbReference type="GO" id="GO:0008270">
    <property type="term" value="F:zinc ion binding"/>
    <property type="evidence" value="ECO:0007669"/>
    <property type="project" value="UniProtKB-UniRule"/>
</dbReference>
<dbReference type="GO" id="GO:0019698">
    <property type="term" value="P:D-galacturonate catabolic process"/>
    <property type="evidence" value="ECO:0007669"/>
    <property type="project" value="TreeGrafter"/>
</dbReference>
<dbReference type="GO" id="GO:0042840">
    <property type="term" value="P:D-glucuronate catabolic process"/>
    <property type="evidence" value="ECO:0007669"/>
    <property type="project" value="TreeGrafter"/>
</dbReference>
<dbReference type="GO" id="GO:0045490">
    <property type="term" value="P:pectin catabolic process"/>
    <property type="evidence" value="ECO:0007669"/>
    <property type="project" value="UniProtKB-UniRule"/>
</dbReference>
<dbReference type="CDD" id="cd20491">
    <property type="entry name" value="cupin_KduI_C"/>
    <property type="match status" value="1"/>
</dbReference>
<dbReference type="CDD" id="cd20294">
    <property type="entry name" value="cupin_KduI_N"/>
    <property type="match status" value="1"/>
</dbReference>
<dbReference type="FunFam" id="2.60.120.10:FF:000018">
    <property type="entry name" value="4-deoxy-L-threo-5-hexosulose-uronate ketol-isomerase"/>
    <property type="match status" value="1"/>
</dbReference>
<dbReference type="FunFam" id="2.60.120.520:FF:000001">
    <property type="entry name" value="4-deoxy-L-threo-5-hexosulose-uronate ketol-isomerase"/>
    <property type="match status" value="1"/>
</dbReference>
<dbReference type="Gene3D" id="2.60.120.10">
    <property type="entry name" value="Jelly Rolls"/>
    <property type="match status" value="1"/>
</dbReference>
<dbReference type="Gene3D" id="2.60.120.520">
    <property type="entry name" value="pectin degrading enzyme 5-keto 4- deoxyuronate isomerase, domain 1"/>
    <property type="match status" value="1"/>
</dbReference>
<dbReference type="HAMAP" id="MF_00687">
    <property type="entry name" value="KduI"/>
    <property type="match status" value="1"/>
</dbReference>
<dbReference type="InterPro" id="IPR007045">
    <property type="entry name" value="KduI"/>
</dbReference>
<dbReference type="InterPro" id="IPR021120">
    <property type="entry name" value="KduI/IolB_isomerase"/>
</dbReference>
<dbReference type="InterPro" id="IPR027449">
    <property type="entry name" value="KduI_N"/>
</dbReference>
<dbReference type="InterPro" id="IPR014710">
    <property type="entry name" value="RmlC-like_jellyroll"/>
</dbReference>
<dbReference type="InterPro" id="IPR011051">
    <property type="entry name" value="RmlC_Cupin_sf"/>
</dbReference>
<dbReference type="NCBIfam" id="NF002091">
    <property type="entry name" value="PRK00924.1"/>
    <property type="match status" value="1"/>
</dbReference>
<dbReference type="PANTHER" id="PTHR38461">
    <property type="entry name" value="4-DEOXY-L-THREO-5-HEXOSULOSE-URONATE KETOL-ISOMERASE"/>
    <property type="match status" value="1"/>
</dbReference>
<dbReference type="PANTHER" id="PTHR38461:SF1">
    <property type="entry name" value="4-DEOXY-L-THREO-5-HEXOSULOSE-URONATE KETOL-ISOMERASE"/>
    <property type="match status" value="1"/>
</dbReference>
<dbReference type="Pfam" id="PF04962">
    <property type="entry name" value="KduI"/>
    <property type="match status" value="1"/>
</dbReference>
<dbReference type="PIRSF" id="PIRSF006625">
    <property type="entry name" value="KduI"/>
    <property type="match status" value="1"/>
</dbReference>
<dbReference type="SUPFAM" id="SSF51182">
    <property type="entry name" value="RmlC-like cupins"/>
    <property type="match status" value="1"/>
</dbReference>